<protein>
    <recommendedName>
        <fullName evidence="1">Small ribosomal subunit protein bS20</fullName>
    </recommendedName>
    <alternativeName>
        <fullName evidence="3">30S ribosomal protein S20</fullName>
    </alternativeName>
</protein>
<comment type="function">
    <text evidence="1">Binds directly to 16S ribosomal RNA.</text>
</comment>
<comment type="similarity">
    <text evidence="1">Belongs to the bacterial ribosomal protein bS20 family.</text>
</comment>
<name>RS20_PSESM</name>
<feature type="chain" id="PRO_0000168016" description="Small ribosomal subunit protein bS20">
    <location>
        <begin position="1"/>
        <end position="92"/>
    </location>
</feature>
<feature type="region of interest" description="Disordered" evidence="2">
    <location>
        <begin position="1"/>
        <end position="23"/>
    </location>
</feature>
<feature type="compositionally biased region" description="Basic residues" evidence="2">
    <location>
        <begin position="7"/>
        <end position="20"/>
    </location>
</feature>
<proteinExistence type="inferred from homology"/>
<organism>
    <name type="scientific">Pseudomonas syringae pv. tomato (strain ATCC BAA-871 / DC3000)</name>
    <dbReference type="NCBI Taxonomy" id="223283"/>
    <lineage>
        <taxon>Bacteria</taxon>
        <taxon>Pseudomonadati</taxon>
        <taxon>Pseudomonadota</taxon>
        <taxon>Gammaproteobacteria</taxon>
        <taxon>Pseudomonadales</taxon>
        <taxon>Pseudomonadaceae</taxon>
        <taxon>Pseudomonas</taxon>
    </lineage>
</organism>
<accession>Q889E8</accession>
<keyword id="KW-1185">Reference proteome</keyword>
<keyword id="KW-0687">Ribonucleoprotein</keyword>
<keyword id="KW-0689">Ribosomal protein</keyword>
<keyword id="KW-0694">RNA-binding</keyword>
<keyword id="KW-0699">rRNA-binding</keyword>
<dbReference type="EMBL" id="AE016853">
    <property type="protein sequence ID" value="AAO54344.1"/>
    <property type="molecule type" value="Genomic_DNA"/>
</dbReference>
<dbReference type="RefSeq" id="NP_790649.1">
    <property type="nucleotide sequence ID" value="NC_004578.1"/>
</dbReference>
<dbReference type="RefSeq" id="WP_003344603.1">
    <property type="nucleotide sequence ID" value="NC_004578.1"/>
</dbReference>
<dbReference type="SMR" id="Q889E8"/>
<dbReference type="STRING" id="223283.PSPTO_0802"/>
<dbReference type="GeneID" id="96217048"/>
<dbReference type="KEGG" id="pst:PSPTO_0802"/>
<dbReference type="PATRIC" id="fig|223283.9.peg.816"/>
<dbReference type="eggNOG" id="COG0268">
    <property type="taxonomic scope" value="Bacteria"/>
</dbReference>
<dbReference type="HOGENOM" id="CLU_160655_4_0_6"/>
<dbReference type="OrthoDB" id="9807974at2"/>
<dbReference type="PhylomeDB" id="Q889E8"/>
<dbReference type="Proteomes" id="UP000002515">
    <property type="component" value="Chromosome"/>
</dbReference>
<dbReference type="GO" id="GO:0005829">
    <property type="term" value="C:cytosol"/>
    <property type="evidence" value="ECO:0007669"/>
    <property type="project" value="TreeGrafter"/>
</dbReference>
<dbReference type="GO" id="GO:0015935">
    <property type="term" value="C:small ribosomal subunit"/>
    <property type="evidence" value="ECO:0007669"/>
    <property type="project" value="TreeGrafter"/>
</dbReference>
<dbReference type="GO" id="GO:0070181">
    <property type="term" value="F:small ribosomal subunit rRNA binding"/>
    <property type="evidence" value="ECO:0007669"/>
    <property type="project" value="TreeGrafter"/>
</dbReference>
<dbReference type="GO" id="GO:0003735">
    <property type="term" value="F:structural constituent of ribosome"/>
    <property type="evidence" value="ECO:0007669"/>
    <property type="project" value="InterPro"/>
</dbReference>
<dbReference type="GO" id="GO:0006412">
    <property type="term" value="P:translation"/>
    <property type="evidence" value="ECO:0007669"/>
    <property type="project" value="UniProtKB-UniRule"/>
</dbReference>
<dbReference type="FunFam" id="1.20.58.110:FF:000001">
    <property type="entry name" value="30S ribosomal protein S20"/>
    <property type="match status" value="1"/>
</dbReference>
<dbReference type="Gene3D" id="1.20.58.110">
    <property type="entry name" value="Ribosomal protein S20"/>
    <property type="match status" value="1"/>
</dbReference>
<dbReference type="HAMAP" id="MF_00500">
    <property type="entry name" value="Ribosomal_bS20"/>
    <property type="match status" value="1"/>
</dbReference>
<dbReference type="InterPro" id="IPR002583">
    <property type="entry name" value="Ribosomal_bS20"/>
</dbReference>
<dbReference type="InterPro" id="IPR036510">
    <property type="entry name" value="Ribosomal_bS20_sf"/>
</dbReference>
<dbReference type="NCBIfam" id="TIGR00029">
    <property type="entry name" value="S20"/>
    <property type="match status" value="1"/>
</dbReference>
<dbReference type="PANTHER" id="PTHR33398">
    <property type="entry name" value="30S RIBOSOMAL PROTEIN S20"/>
    <property type="match status" value="1"/>
</dbReference>
<dbReference type="PANTHER" id="PTHR33398:SF1">
    <property type="entry name" value="SMALL RIBOSOMAL SUBUNIT PROTEIN BS20C"/>
    <property type="match status" value="1"/>
</dbReference>
<dbReference type="Pfam" id="PF01649">
    <property type="entry name" value="Ribosomal_S20p"/>
    <property type="match status" value="1"/>
</dbReference>
<dbReference type="SUPFAM" id="SSF46992">
    <property type="entry name" value="Ribosomal protein S20"/>
    <property type="match status" value="1"/>
</dbReference>
<evidence type="ECO:0000255" key="1">
    <source>
        <dbReference type="HAMAP-Rule" id="MF_00500"/>
    </source>
</evidence>
<evidence type="ECO:0000256" key="2">
    <source>
        <dbReference type="SAM" id="MobiDB-lite"/>
    </source>
</evidence>
<evidence type="ECO:0000305" key="3"/>
<reference key="1">
    <citation type="journal article" date="2003" name="Proc. Natl. Acad. Sci. U.S.A.">
        <title>The complete genome sequence of the Arabidopsis and tomato pathogen Pseudomonas syringae pv. tomato DC3000.</title>
        <authorList>
            <person name="Buell C.R."/>
            <person name="Joardar V."/>
            <person name="Lindeberg M."/>
            <person name="Selengut J."/>
            <person name="Paulsen I.T."/>
            <person name="Gwinn M.L."/>
            <person name="Dodson R.J."/>
            <person name="DeBoy R.T."/>
            <person name="Durkin A.S."/>
            <person name="Kolonay J.F."/>
            <person name="Madupu R."/>
            <person name="Daugherty S.C."/>
            <person name="Brinkac L.M."/>
            <person name="Beanan M.J."/>
            <person name="Haft D.H."/>
            <person name="Nelson W.C."/>
            <person name="Davidsen T.M."/>
            <person name="Zafar N."/>
            <person name="Zhou L."/>
            <person name="Liu J."/>
            <person name="Yuan Q."/>
            <person name="Khouri H.M."/>
            <person name="Fedorova N.B."/>
            <person name="Tran B."/>
            <person name="Russell D."/>
            <person name="Berry K.J."/>
            <person name="Utterback T.R."/>
            <person name="Van Aken S.E."/>
            <person name="Feldblyum T.V."/>
            <person name="D'Ascenzo M."/>
            <person name="Deng W.-L."/>
            <person name="Ramos A.R."/>
            <person name="Alfano J.R."/>
            <person name="Cartinhour S."/>
            <person name="Chatterjee A.K."/>
            <person name="Delaney T.P."/>
            <person name="Lazarowitz S.G."/>
            <person name="Martin G.B."/>
            <person name="Schneider D.J."/>
            <person name="Tang X."/>
            <person name="Bender C.L."/>
            <person name="White O."/>
            <person name="Fraser C.M."/>
            <person name="Collmer A."/>
        </authorList>
    </citation>
    <scope>NUCLEOTIDE SEQUENCE [LARGE SCALE GENOMIC DNA]</scope>
    <source>
        <strain>ATCC BAA-871 / DC3000</strain>
    </source>
</reference>
<sequence>MANTPSAKKRAKQAEKRRSHNASLRSMVRTYIKNVVKAIDAKDAEKAQAAYVLAVPVIDRMADKGIIHKNKAARHKGRLNGHIKALSLAAAA</sequence>
<gene>
    <name evidence="1" type="primary">rpsT</name>
    <name type="ordered locus">PSPTO_0802</name>
</gene>